<organism>
    <name type="scientific">Salmonella arizonae (strain ATCC BAA-731 / CDC346-86 / RSK2980)</name>
    <dbReference type="NCBI Taxonomy" id="41514"/>
    <lineage>
        <taxon>Bacteria</taxon>
        <taxon>Pseudomonadati</taxon>
        <taxon>Pseudomonadota</taxon>
        <taxon>Gammaproteobacteria</taxon>
        <taxon>Enterobacterales</taxon>
        <taxon>Enterobacteriaceae</taxon>
        <taxon>Salmonella</taxon>
    </lineage>
</organism>
<keyword id="KW-0963">Cytoplasm</keyword>
<keyword id="KW-0489">Methyltransferase</keyword>
<keyword id="KW-1185">Reference proteome</keyword>
<keyword id="KW-0949">S-adenosyl-L-methionine</keyword>
<keyword id="KW-0808">Transferase</keyword>
<name>PIMT_SALAR</name>
<feature type="chain" id="PRO_1000075450" description="Protein-L-isoaspartate O-methyltransferase">
    <location>
        <begin position="1"/>
        <end position="208"/>
    </location>
</feature>
<feature type="active site" evidence="1">
    <location>
        <position position="59"/>
    </location>
</feature>
<accession>A9MF32</accession>
<dbReference type="EC" id="2.1.1.77" evidence="1"/>
<dbReference type="EMBL" id="CP000880">
    <property type="protein sequence ID" value="ABX19984.1"/>
    <property type="molecule type" value="Genomic_DNA"/>
</dbReference>
<dbReference type="SMR" id="A9MF32"/>
<dbReference type="STRING" id="41514.SARI_00030"/>
<dbReference type="KEGG" id="ses:SARI_00030"/>
<dbReference type="HOGENOM" id="CLU_055432_2_0_6"/>
<dbReference type="Proteomes" id="UP000002084">
    <property type="component" value="Chromosome"/>
</dbReference>
<dbReference type="GO" id="GO:0005737">
    <property type="term" value="C:cytoplasm"/>
    <property type="evidence" value="ECO:0007669"/>
    <property type="project" value="UniProtKB-SubCell"/>
</dbReference>
<dbReference type="GO" id="GO:0004719">
    <property type="term" value="F:protein-L-isoaspartate (D-aspartate) O-methyltransferase activity"/>
    <property type="evidence" value="ECO:0007669"/>
    <property type="project" value="UniProtKB-UniRule"/>
</dbReference>
<dbReference type="GO" id="GO:0032259">
    <property type="term" value="P:methylation"/>
    <property type="evidence" value="ECO:0007669"/>
    <property type="project" value="UniProtKB-KW"/>
</dbReference>
<dbReference type="GO" id="GO:0036211">
    <property type="term" value="P:protein modification process"/>
    <property type="evidence" value="ECO:0007669"/>
    <property type="project" value="UniProtKB-UniRule"/>
</dbReference>
<dbReference type="GO" id="GO:0030091">
    <property type="term" value="P:protein repair"/>
    <property type="evidence" value="ECO:0007669"/>
    <property type="project" value="UniProtKB-UniRule"/>
</dbReference>
<dbReference type="CDD" id="cd02440">
    <property type="entry name" value="AdoMet_MTases"/>
    <property type="match status" value="1"/>
</dbReference>
<dbReference type="FunFam" id="3.40.50.150:FF:000010">
    <property type="entry name" value="Protein-L-isoaspartate O-methyltransferase"/>
    <property type="match status" value="1"/>
</dbReference>
<dbReference type="Gene3D" id="3.40.50.150">
    <property type="entry name" value="Vaccinia Virus protein VP39"/>
    <property type="match status" value="1"/>
</dbReference>
<dbReference type="HAMAP" id="MF_00090">
    <property type="entry name" value="PIMT"/>
    <property type="match status" value="1"/>
</dbReference>
<dbReference type="InterPro" id="IPR000682">
    <property type="entry name" value="PCMT"/>
</dbReference>
<dbReference type="InterPro" id="IPR029063">
    <property type="entry name" value="SAM-dependent_MTases_sf"/>
</dbReference>
<dbReference type="NCBIfam" id="TIGR00080">
    <property type="entry name" value="pimt"/>
    <property type="match status" value="1"/>
</dbReference>
<dbReference type="NCBIfam" id="NF001453">
    <property type="entry name" value="PRK00312.1"/>
    <property type="match status" value="1"/>
</dbReference>
<dbReference type="PANTHER" id="PTHR11579">
    <property type="entry name" value="PROTEIN-L-ISOASPARTATE O-METHYLTRANSFERASE"/>
    <property type="match status" value="1"/>
</dbReference>
<dbReference type="PANTHER" id="PTHR11579:SF0">
    <property type="entry name" value="PROTEIN-L-ISOASPARTATE(D-ASPARTATE) O-METHYLTRANSFERASE"/>
    <property type="match status" value="1"/>
</dbReference>
<dbReference type="Pfam" id="PF01135">
    <property type="entry name" value="PCMT"/>
    <property type="match status" value="1"/>
</dbReference>
<dbReference type="SUPFAM" id="SSF53335">
    <property type="entry name" value="S-adenosyl-L-methionine-dependent methyltransferases"/>
    <property type="match status" value="1"/>
</dbReference>
<dbReference type="PROSITE" id="PS01279">
    <property type="entry name" value="PCMT"/>
    <property type="match status" value="1"/>
</dbReference>
<sequence>MVSRRVQALLEQLRAQGIRDEQVLDALAAVPREKFIDEAFEHKAWENIALPIGQGQTISQPYMVARMTELLELTPQSRVLEIGTGSGYQTAILAHLVHHVCSVERIKGLQWQARRRLKQLDLHNVSTRHGDGWQGWQARAPFDAIIVTAAPPEIPTALMAQLDEGGILVLPVGDEQQFLKRVRRRGGEFIIDTVEAVRFVPLVRGELA</sequence>
<evidence type="ECO:0000255" key="1">
    <source>
        <dbReference type="HAMAP-Rule" id="MF_00090"/>
    </source>
</evidence>
<gene>
    <name evidence="1" type="primary">pcm</name>
    <name type="ordered locus">SARI_00030</name>
</gene>
<proteinExistence type="inferred from homology"/>
<protein>
    <recommendedName>
        <fullName evidence="1">Protein-L-isoaspartate O-methyltransferase</fullName>
        <ecNumber evidence="1">2.1.1.77</ecNumber>
    </recommendedName>
    <alternativeName>
        <fullName evidence="1">L-isoaspartyl protein carboxyl methyltransferase</fullName>
    </alternativeName>
    <alternativeName>
        <fullName evidence="1">Protein L-isoaspartyl methyltransferase</fullName>
    </alternativeName>
    <alternativeName>
        <fullName evidence="1">Protein-beta-aspartate methyltransferase</fullName>
        <shortName evidence="1">PIMT</shortName>
    </alternativeName>
</protein>
<comment type="function">
    <text evidence="1">Catalyzes the methyl esterification of L-isoaspartyl residues in peptides and proteins that result from spontaneous decomposition of normal L-aspartyl and L-asparaginyl residues. It plays a role in the repair and/or degradation of damaged proteins.</text>
</comment>
<comment type="catalytic activity">
    <reaction evidence="1">
        <text>[protein]-L-isoaspartate + S-adenosyl-L-methionine = [protein]-L-isoaspartate alpha-methyl ester + S-adenosyl-L-homocysteine</text>
        <dbReference type="Rhea" id="RHEA:12705"/>
        <dbReference type="Rhea" id="RHEA-COMP:12143"/>
        <dbReference type="Rhea" id="RHEA-COMP:12144"/>
        <dbReference type="ChEBI" id="CHEBI:57856"/>
        <dbReference type="ChEBI" id="CHEBI:59789"/>
        <dbReference type="ChEBI" id="CHEBI:90596"/>
        <dbReference type="ChEBI" id="CHEBI:90598"/>
        <dbReference type="EC" id="2.1.1.77"/>
    </reaction>
</comment>
<comment type="subcellular location">
    <subcellularLocation>
        <location evidence="1">Cytoplasm</location>
    </subcellularLocation>
</comment>
<comment type="similarity">
    <text evidence="1">Belongs to the methyltransferase superfamily. L-isoaspartyl/D-aspartyl protein methyltransferase family.</text>
</comment>
<reference key="1">
    <citation type="submission" date="2007-11" db="EMBL/GenBank/DDBJ databases">
        <authorList>
            <consortium name="The Salmonella enterica serovar Arizonae Genome Sequencing Project"/>
            <person name="McClelland M."/>
            <person name="Sanderson E.K."/>
            <person name="Porwollik S."/>
            <person name="Spieth J."/>
            <person name="Clifton W.S."/>
            <person name="Fulton R."/>
            <person name="Chunyan W."/>
            <person name="Wollam A."/>
            <person name="Shah N."/>
            <person name="Pepin K."/>
            <person name="Bhonagiri V."/>
            <person name="Nash W."/>
            <person name="Johnson M."/>
            <person name="Thiruvilangam P."/>
            <person name="Wilson R."/>
        </authorList>
    </citation>
    <scope>NUCLEOTIDE SEQUENCE [LARGE SCALE GENOMIC DNA]</scope>
    <source>
        <strain>ATCC BAA-731 / CDC346-86 / RSK2980</strain>
    </source>
</reference>